<evidence type="ECO:0000250" key="1">
    <source>
        <dbReference type="UniProtKB" id="Q91V82"/>
    </source>
</evidence>
<evidence type="ECO:0000255" key="2"/>
<evidence type="ECO:0000256" key="3">
    <source>
        <dbReference type="SAM" id="MobiDB-lite"/>
    </source>
</evidence>
<evidence type="ECO:0000269" key="4">
    <source>
    </source>
</evidence>
<evidence type="ECO:0000269" key="5">
    <source>
    </source>
</evidence>
<evidence type="ECO:0000269" key="6">
    <source>
    </source>
</evidence>
<evidence type="ECO:0000269" key="7">
    <source>
    </source>
</evidence>
<evidence type="ECO:0000303" key="8">
    <source>
    </source>
</evidence>
<evidence type="ECO:0000305" key="9"/>
<evidence type="ECO:0000312" key="10">
    <source>
        <dbReference type="HGNC" id="HGNC:16196"/>
    </source>
</evidence>
<reference key="1">
    <citation type="journal article" date="2001" name="Endocrinology">
        <title>Primate epididymis-specific proteins: characterization of ESC42, a novel protein containing a trefoil-like motif in monkey and human.</title>
        <authorList>
            <person name="Liu Q."/>
            <person name="Hamil K.G."/>
            <person name="Sivashanmugam P."/>
            <person name="Grossman G."/>
            <person name="Soundararajan R."/>
            <person name="Rao A.J."/>
            <person name="Richardson R.T."/>
            <person name="Zhang Y.-L."/>
            <person name="O'Rand M.G."/>
            <person name="Petrusz P."/>
            <person name="French F.S."/>
            <person name="Hall S.H."/>
        </authorList>
    </citation>
    <scope>NUCLEOTIDE SEQUENCE [MRNA]</scope>
    <source>
        <tissue>Epididymis</tissue>
    </source>
</reference>
<reference key="2">
    <citation type="journal article" date="2003" name="Am. J. Respir. Cell Mol. Biol.">
        <title>ORFeome-based search of airway epithelial cell-specific novel human beta-defensin genes.</title>
        <authorList>
            <person name="Kao C.Y."/>
            <person name="Chen Y."/>
            <person name="Zhao Y.H."/>
            <person name="Wu R."/>
        </authorList>
    </citation>
    <scope>NUCLEOTIDE SEQUENCE [MRNA]</scope>
    <scope>SUBCELLULAR LOCATION</scope>
    <scope>TISSUE SPECIFICITY</scope>
</reference>
<reference key="3">
    <citation type="journal article" date="2001" name="Nature">
        <title>The DNA sequence and comparative analysis of human chromosome 20.</title>
        <authorList>
            <person name="Deloukas P."/>
            <person name="Matthews L.H."/>
            <person name="Ashurst J.L."/>
            <person name="Burton J."/>
            <person name="Gilbert J.G.R."/>
            <person name="Jones M."/>
            <person name="Stavrides G."/>
            <person name="Almeida J.P."/>
            <person name="Babbage A.K."/>
            <person name="Bagguley C.L."/>
            <person name="Bailey J."/>
            <person name="Barlow K.F."/>
            <person name="Bates K.N."/>
            <person name="Beard L.M."/>
            <person name="Beare D.M."/>
            <person name="Beasley O.P."/>
            <person name="Bird C.P."/>
            <person name="Blakey S.E."/>
            <person name="Bridgeman A.M."/>
            <person name="Brown A.J."/>
            <person name="Buck D."/>
            <person name="Burrill W.D."/>
            <person name="Butler A.P."/>
            <person name="Carder C."/>
            <person name="Carter N.P."/>
            <person name="Chapman J.C."/>
            <person name="Clamp M."/>
            <person name="Clark G."/>
            <person name="Clark L.N."/>
            <person name="Clark S.Y."/>
            <person name="Clee C.M."/>
            <person name="Clegg S."/>
            <person name="Cobley V.E."/>
            <person name="Collier R.E."/>
            <person name="Connor R.E."/>
            <person name="Corby N.R."/>
            <person name="Coulson A."/>
            <person name="Coville G.J."/>
            <person name="Deadman R."/>
            <person name="Dhami P.D."/>
            <person name="Dunn M."/>
            <person name="Ellington A.G."/>
            <person name="Frankland J.A."/>
            <person name="Fraser A."/>
            <person name="French L."/>
            <person name="Garner P."/>
            <person name="Grafham D.V."/>
            <person name="Griffiths C."/>
            <person name="Griffiths M.N.D."/>
            <person name="Gwilliam R."/>
            <person name="Hall R.E."/>
            <person name="Hammond S."/>
            <person name="Harley J.L."/>
            <person name="Heath P.D."/>
            <person name="Ho S."/>
            <person name="Holden J.L."/>
            <person name="Howden P.J."/>
            <person name="Huckle E."/>
            <person name="Hunt A.R."/>
            <person name="Hunt S.E."/>
            <person name="Jekosch K."/>
            <person name="Johnson C.M."/>
            <person name="Johnson D."/>
            <person name="Kay M.P."/>
            <person name="Kimberley A.M."/>
            <person name="King A."/>
            <person name="Knights A."/>
            <person name="Laird G.K."/>
            <person name="Lawlor S."/>
            <person name="Lehvaeslaiho M.H."/>
            <person name="Leversha M.A."/>
            <person name="Lloyd C."/>
            <person name="Lloyd D.M."/>
            <person name="Lovell J.D."/>
            <person name="Marsh V.L."/>
            <person name="Martin S.L."/>
            <person name="McConnachie L.J."/>
            <person name="McLay K."/>
            <person name="McMurray A.A."/>
            <person name="Milne S.A."/>
            <person name="Mistry D."/>
            <person name="Moore M.J.F."/>
            <person name="Mullikin J.C."/>
            <person name="Nickerson T."/>
            <person name="Oliver K."/>
            <person name="Parker A."/>
            <person name="Patel R."/>
            <person name="Pearce T.A.V."/>
            <person name="Peck A.I."/>
            <person name="Phillimore B.J.C.T."/>
            <person name="Prathalingam S.R."/>
            <person name="Plumb R.W."/>
            <person name="Ramsay H."/>
            <person name="Rice C.M."/>
            <person name="Ross M.T."/>
            <person name="Scott C.E."/>
            <person name="Sehra H.K."/>
            <person name="Shownkeen R."/>
            <person name="Sims S."/>
            <person name="Skuce C.D."/>
            <person name="Smith M.L."/>
            <person name="Soderlund C."/>
            <person name="Steward C.A."/>
            <person name="Sulston J.E."/>
            <person name="Swann R.M."/>
            <person name="Sycamore N."/>
            <person name="Taylor R."/>
            <person name="Tee L."/>
            <person name="Thomas D.W."/>
            <person name="Thorpe A."/>
            <person name="Tracey A."/>
            <person name="Tromans A.C."/>
            <person name="Vaudin M."/>
            <person name="Wall M."/>
            <person name="Wallis J.M."/>
            <person name="Whitehead S.L."/>
            <person name="Whittaker P."/>
            <person name="Willey D.L."/>
            <person name="Williams L."/>
            <person name="Williams S.A."/>
            <person name="Wilming L."/>
            <person name="Wray P.W."/>
            <person name="Hubbard T."/>
            <person name="Durbin R.M."/>
            <person name="Bentley D.R."/>
            <person name="Beck S."/>
            <person name="Rogers J."/>
        </authorList>
    </citation>
    <scope>NUCLEOTIDE SEQUENCE [LARGE SCALE GENOMIC DNA]</scope>
</reference>
<reference key="4">
    <citation type="journal article" date="2004" name="Genome Res.">
        <title>The status, quality, and expansion of the NIH full-length cDNA project: the Mammalian Gene Collection (MGC).</title>
        <authorList>
            <consortium name="The MGC Project Team"/>
        </authorList>
    </citation>
    <scope>NUCLEOTIDE SEQUENCE [LARGE SCALE MRNA]</scope>
    <source>
        <tissue>Testis</tissue>
    </source>
</reference>
<reference key="5">
    <citation type="journal article" date="2002" name="Proc. Natl. Acad. Sci. U.S.A.">
        <title>Discovery of five conserved beta-defensin gene clusters using a computational search strategy.</title>
        <authorList>
            <person name="Schutte B.C."/>
            <person name="Mitros J.P."/>
            <person name="Bartlett J.A."/>
            <person name="Walters J.D."/>
            <person name="Jia H.P."/>
            <person name="Welsh M.J."/>
            <person name="Casavant T.L."/>
            <person name="McCray P.B. Jr."/>
        </authorList>
    </citation>
    <scope>NUCLEOTIDE SEQUENCE [MRNA] OF 23-123</scope>
    <scope>IDENTIFICATION</scope>
    <source>
        <tissue>B-cell</tissue>
        <tissue>Fetal lung</tissue>
        <tissue>Testis</tissue>
    </source>
</reference>
<reference key="6">
    <citation type="journal article" date="2004" name="Endocrinology">
        <title>The androgen-regulated epididymal sperm-binding protein, human beta-defensin 118 (DEFB118) (formerly ESC42), is an antimicrobial beta-defensin.</title>
        <authorList>
            <person name="Yenugu S."/>
            <person name="Hamil K.G."/>
            <person name="Radhakrishnan Y."/>
            <person name="French F.S."/>
            <person name="Hall S.H."/>
        </authorList>
    </citation>
    <scope>FUNCTION</scope>
    <scope>DISULFIDE BONDS</scope>
</reference>
<reference key="7">
    <citation type="journal article" date="2020" name="Biomed. Res. Int.">
        <title>Expression and Functional Characterization of a Novel Antimicrobial Peptide: Human Beta-Defensin 118.</title>
        <authorList>
            <person name="Lin Q."/>
            <person name="Xie K."/>
            <person name="Chen D."/>
            <person name="Yu B."/>
            <person name="Mao X."/>
            <person name="Yu J."/>
            <person name="Luo J."/>
            <person name="Zheng P."/>
            <person name="Luo Y."/>
            <person name="Yan H."/>
            <person name="He J."/>
        </authorList>
    </citation>
    <scope>FUNCTION</scope>
</reference>
<reference key="8">
    <citation type="journal article" date="2021" name="Peptides">
        <title>The truncated human beta-defensin 118 can modulate lipopolysaccharide mediated inflammatory response in RAW264.7 macrophages.</title>
        <authorList>
            <person name="Hou J."/>
            <person name="Liu H.Y."/>
            <person name="Diao H."/>
            <person name="Yu H."/>
        </authorList>
    </citation>
    <scope>FUNCTION</scope>
</reference>
<accession>Q96PH6</accession>
<accession>Q17RC4</accession>
<accession>Q8N691</accession>
<accession>Q9NUH0</accession>
<name>DB118_HUMAN</name>
<feature type="signal peptide" evidence="2">
    <location>
        <begin position="1"/>
        <end position="19"/>
    </location>
</feature>
<feature type="peptide" id="PRO_0000006983" description="Defensin beta 118">
    <location>
        <begin position="20"/>
        <end position="62"/>
    </location>
</feature>
<feature type="propeptide" id="PRO_0000006984" evidence="2">
    <location>
        <begin position="65"/>
        <end position="123"/>
    </location>
</feature>
<feature type="region of interest" description="Disordered" evidence="3">
    <location>
        <begin position="100"/>
        <end position="123"/>
    </location>
</feature>
<feature type="compositionally biased region" description="Basic and acidic residues" evidence="3">
    <location>
        <begin position="100"/>
        <end position="110"/>
    </location>
</feature>
<feature type="compositionally biased region" description="Polar residues" evidence="3">
    <location>
        <begin position="112"/>
        <end position="123"/>
    </location>
</feature>
<feature type="disulfide bond" evidence="1">
    <location>
        <begin position="27"/>
        <end position="54"/>
    </location>
</feature>
<feature type="disulfide bond" evidence="1">
    <location>
        <begin position="34"/>
        <end position="48"/>
    </location>
</feature>
<feature type="disulfide bond" evidence="1">
    <location>
        <begin position="38"/>
        <end position="55"/>
    </location>
</feature>
<feature type="sequence variant" id="VAR_061133" description="In dbSNP:rs34173055.">
    <original>I</original>
    <variation>V</variation>
    <location>
        <position position="56"/>
    </location>
</feature>
<dbReference type="EMBL" id="AF347073">
    <property type="protein sequence ID" value="AAL27987.1"/>
    <property type="molecule type" value="mRNA"/>
</dbReference>
<dbReference type="EMBL" id="AF529415">
    <property type="protein sequence ID" value="AAQ09524.1"/>
    <property type="molecule type" value="mRNA"/>
</dbReference>
<dbReference type="EMBL" id="AL031650">
    <property type="status" value="NOT_ANNOTATED_CDS"/>
    <property type="molecule type" value="Genomic_DNA"/>
</dbReference>
<dbReference type="EMBL" id="BC117378">
    <property type="protein sequence ID" value="AAI17379.1"/>
    <property type="molecule type" value="mRNA"/>
</dbReference>
<dbReference type="EMBL" id="AY122471">
    <property type="protein sequence ID" value="AAM93913.1"/>
    <property type="molecule type" value="mRNA"/>
</dbReference>
<dbReference type="CCDS" id="CCDS13177.1"/>
<dbReference type="RefSeq" id="NP_473453.1">
    <property type="nucleotide sequence ID" value="NM_054112.3"/>
</dbReference>
<dbReference type="SMR" id="Q96PH6"/>
<dbReference type="BioGRID" id="125585">
    <property type="interactions" value="4"/>
</dbReference>
<dbReference type="IntAct" id="Q96PH6">
    <property type="interactions" value="3"/>
</dbReference>
<dbReference type="STRING" id="9606.ENSP00000253381"/>
<dbReference type="GlyGen" id="Q96PH6">
    <property type="glycosylation" value="1 site, 1 O-linked glycan (1 site)"/>
</dbReference>
<dbReference type="iPTMnet" id="Q96PH6"/>
<dbReference type="PhosphoSitePlus" id="Q96PH6"/>
<dbReference type="BioMuta" id="DEFB118"/>
<dbReference type="DMDM" id="23813949"/>
<dbReference type="MassIVE" id="Q96PH6"/>
<dbReference type="PaxDb" id="9606-ENSP00000253381"/>
<dbReference type="PeptideAtlas" id="Q96PH6"/>
<dbReference type="ProteomicsDB" id="77700"/>
<dbReference type="Antibodypedia" id="49713">
    <property type="antibodies" value="9 antibodies from 8 providers"/>
</dbReference>
<dbReference type="DNASU" id="117285"/>
<dbReference type="Ensembl" id="ENST00000253381.3">
    <property type="protein sequence ID" value="ENSP00000253381.2"/>
    <property type="gene ID" value="ENSG00000131068.4"/>
</dbReference>
<dbReference type="GeneID" id="117285"/>
<dbReference type="KEGG" id="hsa:117285"/>
<dbReference type="MANE-Select" id="ENST00000253381.3">
    <property type="protein sequence ID" value="ENSP00000253381.2"/>
    <property type="RefSeq nucleotide sequence ID" value="NM_054112.3"/>
    <property type="RefSeq protein sequence ID" value="NP_473453.1"/>
</dbReference>
<dbReference type="UCSC" id="uc002wvr.4">
    <property type="organism name" value="human"/>
</dbReference>
<dbReference type="AGR" id="HGNC:16196"/>
<dbReference type="CTD" id="117285"/>
<dbReference type="DisGeNET" id="117285"/>
<dbReference type="GeneCards" id="DEFB118"/>
<dbReference type="HGNC" id="HGNC:16196">
    <property type="gene designation" value="DEFB118"/>
</dbReference>
<dbReference type="HPA" id="ENSG00000131068">
    <property type="expression patterns" value="Tissue enriched (epididymis)"/>
</dbReference>
<dbReference type="MIM" id="607650">
    <property type="type" value="gene"/>
</dbReference>
<dbReference type="neXtProt" id="NX_Q96PH6"/>
<dbReference type="PharmGKB" id="PA27245"/>
<dbReference type="VEuPathDB" id="HostDB:ENSG00000131068"/>
<dbReference type="eggNOG" id="ENOG502TM86">
    <property type="taxonomic scope" value="Eukaryota"/>
</dbReference>
<dbReference type="GeneTree" id="ENSGT00530000064565"/>
<dbReference type="HOGENOM" id="CLU_164142_0_0_1"/>
<dbReference type="InParanoid" id="Q96PH6"/>
<dbReference type="OMA" id="CWNKSGH"/>
<dbReference type="OrthoDB" id="9626530at2759"/>
<dbReference type="PAN-GO" id="Q96PH6">
    <property type="GO annotations" value="0 GO annotations based on evolutionary models"/>
</dbReference>
<dbReference type="PhylomeDB" id="Q96PH6"/>
<dbReference type="TreeFam" id="TF336381"/>
<dbReference type="PathwayCommons" id="Q96PH6"/>
<dbReference type="Reactome" id="R-HSA-1461957">
    <property type="pathway name" value="Beta defensins"/>
</dbReference>
<dbReference type="Reactome" id="R-HSA-1461973">
    <property type="pathway name" value="Defensins"/>
</dbReference>
<dbReference type="BioGRID-ORCS" id="117285">
    <property type="hits" value="22 hits in 1130 CRISPR screens"/>
</dbReference>
<dbReference type="GeneWiki" id="DEFB118"/>
<dbReference type="GenomeRNAi" id="117285"/>
<dbReference type="Pharos" id="Q96PH6">
    <property type="development level" value="Tbio"/>
</dbReference>
<dbReference type="PRO" id="PR:Q96PH6"/>
<dbReference type="Proteomes" id="UP000005640">
    <property type="component" value="Chromosome 20"/>
</dbReference>
<dbReference type="RNAct" id="Q96PH6">
    <property type="molecule type" value="protein"/>
</dbReference>
<dbReference type="Bgee" id="ENSG00000131068">
    <property type="expression patterns" value="Expressed in corpus epididymis and 5 other cell types or tissues"/>
</dbReference>
<dbReference type="ExpressionAtlas" id="Q96PH6">
    <property type="expression patterns" value="baseline and differential"/>
</dbReference>
<dbReference type="GO" id="GO:0005576">
    <property type="term" value="C:extracellular region"/>
    <property type="evidence" value="ECO:0007669"/>
    <property type="project" value="UniProtKB-SubCell"/>
</dbReference>
<dbReference type="GO" id="GO:0001530">
    <property type="term" value="F:lipopolysaccharide binding"/>
    <property type="evidence" value="ECO:0000314"/>
    <property type="project" value="UniProtKB"/>
</dbReference>
<dbReference type="GO" id="GO:0140912">
    <property type="term" value="F:membrane destabilizing activity"/>
    <property type="evidence" value="ECO:0000314"/>
    <property type="project" value="UniProtKB"/>
</dbReference>
<dbReference type="GO" id="GO:0061844">
    <property type="term" value="P:antimicrobial humoral immune response mediated by antimicrobial peptide"/>
    <property type="evidence" value="ECO:0000314"/>
    <property type="project" value="UniProtKB"/>
</dbReference>
<dbReference type="GO" id="GO:0007160">
    <property type="term" value="P:cell-matrix adhesion"/>
    <property type="evidence" value="ECO:0000303"/>
    <property type="project" value="UniProtKB"/>
</dbReference>
<dbReference type="GO" id="GO:0042742">
    <property type="term" value="P:defense response to bacterium"/>
    <property type="evidence" value="ECO:0000304"/>
    <property type="project" value="UniProtKB"/>
</dbReference>
<dbReference type="GO" id="GO:0050829">
    <property type="term" value="P:defense response to Gram-negative bacterium"/>
    <property type="evidence" value="ECO:0000314"/>
    <property type="project" value="UniProtKB"/>
</dbReference>
<dbReference type="GO" id="GO:0050830">
    <property type="term" value="P:defense response to Gram-positive bacterium"/>
    <property type="evidence" value="ECO:0000314"/>
    <property type="project" value="UniProtKB"/>
</dbReference>
<dbReference type="GO" id="GO:0045087">
    <property type="term" value="P:innate immune response"/>
    <property type="evidence" value="ECO:0000314"/>
    <property type="project" value="UniProtKB"/>
</dbReference>
<dbReference type="GO" id="GO:0031640">
    <property type="term" value="P:killing of cells of another organism"/>
    <property type="evidence" value="ECO:0000314"/>
    <property type="project" value="UniProtKB"/>
</dbReference>
<dbReference type="GO" id="GO:0007162">
    <property type="term" value="P:negative regulation of cell adhesion"/>
    <property type="evidence" value="ECO:0000314"/>
    <property type="project" value="UniProtKB"/>
</dbReference>
<dbReference type="GO" id="GO:0031665">
    <property type="term" value="P:negative regulation of lipopolysaccharide-mediated signaling pathway"/>
    <property type="evidence" value="ECO:0000314"/>
    <property type="project" value="UniProtKB"/>
</dbReference>
<dbReference type="GO" id="GO:0007283">
    <property type="term" value="P:spermatogenesis"/>
    <property type="evidence" value="ECO:0000303"/>
    <property type="project" value="UniProtKB"/>
</dbReference>
<dbReference type="InterPro" id="IPR050544">
    <property type="entry name" value="Beta-defensin"/>
</dbReference>
<dbReference type="InterPro" id="IPR025933">
    <property type="entry name" value="Beta_defensin_dom"/>
</dbReference>
<dbReference type="PANTHER" id="PTHR15001">
    <property type="entry name" value="BETA-DEFENSIN 123-RELATED"/>
    <property type="match status" value="1"/>
</dbReference>
<dbReference type="PANTHER" id="PTHR15001:SF7">
    <property type="entry name" value="DEFENSIN BETA 118"/>
    <property type="match status" value="1"/>
</dbReference>
<dbReference type="Pfam" id="PF13841">
    <property type="entry name" value="Defensin_beta_2"/>
    <property type="match status" value="1"/>
</dbReference>
<proteinExistence type="evidence at protein level"/>
<keyword id="KW-0044">Antibiotic</keyword>
<keyword id="KW-0929">Antimicrobial</keyword>
<keyword id="KW-0165">Cleavage on pair of basic residues</keyword>
<keyword id="KW-0211">Defensin</keyword>
<keyword id="KW-1015">Disulfide bond</keyword>
<keyword id="KW-1267">Proteomics identification</keyword>
<keyword id="KW-1185">Reference proteome</keyword>
<keyword id="KW-0964">Secreted</keyword>
<keyword id="KW-0732">Signal</keyword>
<gene>
    <name type="primary">DEFB118</name>
    <name type="synonym">C20orf63</name>
    <name type="synonym">DEFB18</name>
    <name type="synonym">ESC42</name>
</gene>
<comment type="function">
    <text evidence="5 6 7">Host defense peptide that exhibits antimicrobial activity against both Gram-negative bacteria, such as E.coli and S.typhimurium, and Gram-positive bacteria, such as S.aureus and B.subtilis (PubMed:15033915, PubMed:33224970). Inhibits cell adhesion of E.coli on intestinal epithelial enterocytes (PubMed:33224970). Causes rapid permeabilization of both the outer and inner membrane of E.coli, leading to morphological alterations on the bacterial surface (PubMed:15033915). Binds to bacterial lipopolysaccharides (LPS) with high affinity, and may thereby be involved in immunoregulation through LPS neutralization (PubMed:33181266). May contribute to epididymal innate immunity and protect the sperm against attack by microorganisms (PubMed:15033915).</text>
</comment>
<comment type="interaction">
    <interactant intactId="EBI-17250528">
        <id>Q96PH6</id>
    </interactant>
    <interactant intactId="EBI-6873005">
        <id>P43080</id>
        <label>GUCA1A</label>
    </interactant>
    <organismsDiffer>false</organismsDiffer>
    <experiments>3</experiments>
</comment>
<comment type="subcellular location">
    <subcellularLocation>
        <location evidence="4">Secreted</location>
    </subcellularLocation>
</comment>
<comment type="tissue specificity">
    <text evidence="4">High-level and epididymis-specific expression (PubMed:12600824). Most abundant in the epithelium of the caput and present in the epididymis lumen and bound to sperm (PubMed:12600824). Also expressed in pancreas (PubMed:12600824).</text>
</comment>
<comment type="PTM">
    <text evidence="5">The three-dimensional structure formed by the three intramolecular disulfide bridges is indispensable for antimicrobial activity.</text>
</comment>
<comment type="similarity">
    <text evidence="9">Belongs to the beta-defensin family.</text>
</comment>
<sequence length="123" mass="13614">MKLLLLALPMLVLLPQVIPAYSGEKKCWNRSGHCRKQCKDGEAVKDTCKNLRACCIPSNEDHRRVPATSPTPLSDSTPGIIDDILTVRFTTDYFEVSSKKDMVEESEAGRGTETSLPNVHHSS</sequence>
<protein>
    <recommendedName>
        <fullName evidence="10">Defensin beta 118</fullName>
    </recommendedName>
    <alternativeName>
        <fullName evidence="8">Beta-defensin 18</fullName>
        <shortName evidence="8">DEFB-18</shortName>
    </alternativeName>
    <alternativeName>
        <fullName>Epididymal secretory protein 13.6</fullName>
        <shortName>ESP13.6</shortName>
    </alternativeName>
</protein>
<organism>
    <name type="scientific">Homo sapiens</name>
    <name type="common">Human</name>
    <dbReference type="NCBI Taxonomy" id="9606"/>
    <lineage>
        <taxon>Eukaryota</taxon>
        <taxon>Metazoa</taxon>
        <taxon>Chordata</taxon>
        <taxon>Craniata</taxon>
        <taxon>Vertebrata</taxon>
        <taxon>Euteleostomi</taxon>
        <taxon>Mammalia</taxon>
        <taxon>Eutheria</taxon>
        <taxon>Euarchontoglires</taxon>
        <taxon>Primates</taxon>
        <taxon>Haplorrhini</taxon>
        <taxon>Catarrhini</taxon>
        <taxon>Hominidae</taxon>
        <taxon>Homo</taxon>
    </lineage>
</organism>